<protein>
    <recommendedName>
        <fullName>Protein YwqH</fullName>
    </recommendedName>
</protein>
<accession>P96720</accession>
<evidence type="ECO:0000255" key="1"/>
<evidence type="ECO:0000269" key="2">
    <source>
    </source>
</evidence>
<comment type="disruption phenotype">
    <text evidence="2">Deletion of the ywqH-ywqI-ywqJ-ywqK-nfi operon has no visible growth phenotype, however it is out-competed by wild-type cells.</text>
</comment>
<proteinExistence type="predicted"/>
<dbReference type="EMBL" id="Z92952">
    <property type="protein sequence ID" value="CAB07446.1"/>
    <property type="molecule type" value="Genomic_DNA"/>
</dbReference>
<dbReference type="EMBL" id="AL009126">
    <property type="protein sequence ID" value="CAB15638.1"/>
    <property type="molecule type" value="Genomic_DNA"/>
</dbReference>
<dbReference type="PIR" id="C70067">
    <property type="entry name" value="C70067"/>
</dbReference>
<dbReference type="RefSeq" id="NP_391502.1">
    <property type="nucleotide sequence ID" value="NC_000964.3"/>
</dbReference>
<dbReference type="RefSeq" id="WP_003242741.1">
    <property type="nucleotide sequence ID" value="NZ_OZ025638.1"/>
</dbReference>
<dbReference type="SMR" id="P96720"/>
<dbReference type="FunCoup" id="P96720">
    <property type="interactions" value="17"/>
</dbReference>
<dbReference type="STRING" id="224308.BSU36210"/>
<dbReference type="PaxDb" id="224308-BSU36210"/>
<dbReference type="EnsemblBacteria" id="CAB15638">
    <property type="protein sequence ID" value="CAB15638"/>
    <property type="gene ID" value="BSU_36210"/>
</dbReference>
<dbReference type="GeneID" id="937905"/>
<dbReference type="KEGG" id="bsu:BSU36210"/>
<dbReference type="PATRIC" id="fig|224308.179.peg.3918"/>
<dbReference type="InParanoid" id="P96720"/>
<dbReference type="OrthoDB" id="2857147at2"/>
<dbReference type="BioCyc" id="BSUB:BSU36210-MONOMER"/>
<dbReference type="Proteomes" id="UP000001570">
    <property type="component" value="Chromosome"/>
</dbReference>
<dbReference type="InterPro" id="IPR031681">
    <property type="entry name" value="YwqH-like"/>
</dbReference>
<dbReference type="Pfam" id="PF16888">
    <property type="entry name" value="YwqH-like"/>
    <property type="match status" value="1"/>
</dbReference>
<gene>
    <name type="primary">ywqH</name>
    <name type="ordered locus">BSU36210</name>
</gene>
<reference key="1">
    <citation type="journal article" date="1997" name="Microbiology">
        <title>The Bacillus subtilis genome from gerBC (311 degrees) to licR (334 degrees).</title>
        <authorList>
            <person name="Presecan E."/>
            <person name="Moszer I."/>
            <person name="Boursier L."/>
            <person name="Cruz Ramos H."/>
            <person name="De La Fuente V."/>
            <person name="Hullo M.-F."/>
            <person name="Lelong C."/>
            <person name="Schleich S."/>
            <person name="Sekowska A."/>
            <person name="Song B.H."/>
            <person name="Villani G."/>
            <person name="Kunst F."/>
            <person name="Danchin A."/>
            <person name="Glaser P."/>
        </authorList>
    </citation>
    <scope>NUCLEOTIDE SEQUENCE [GENOMIC DNA]</scope>
    <source>
        <strain>168</strain>
    </source>
</reference>
<reference key="2">
    <citation type="journal article" date="1997" name="Nature">
        <title>The complete genome sequence of the Gram-positive bacterium Bacillus subtilis.</title>
        <authorList>
            <person name="Kunst F."/>
            <person name="Ogasawara N."/>
            <person name="Moszer I."/>
            <person name="Albertini A.M."/>
            <person name="Alloni G."/>
            <person name="Azevedo V."/>
            <person name="Bertero M.G."/>
            <person name="Bessieres P."/>
            <person name="Bolotin A."/>
            <person name="Borchert S."/>
            <person name="Borriss R."/>
            <person name="Boursier L."/>
            <person name="Brans A."/>
            <person name="Braun M."/>
            <person name="Brignell S.C."/>
            <person name="Bron S."/>
            <person name="Brouillet S."/>
            <person name="Bruschi C.V."/>
            <person name="Caldwell B."/>
            <person name="Capuano V."/>
            <person name="Carter N.M."/>
            <person name="Choi S.-K."/>
            <person name="Codani J.-J."/>
            <person name="Connerton I.F."/>
            <person name="Cummings N.J."/>
            <person name="Daniel R.A."/>
            <person name="Denizot F."/>
            <person name="Devine K.M."/>
            <person name="Duesterhoeft A."/>
            <person name="Ehrlich S.D."/>
            <person name="Emmerson P.T."/>
            <person name="Entian K.-D."/>
            <person name="Errington J."/>
            <person name="Fabret C."/>
            <person name="Ferrari E."/>
            <person name="Foulger D."/>
            <person name="Fritz C."/>
            <person name="Fujita M."/>
            <person name="Fujita Y."/>
            <person name="Fuma S."/>
            <person name="Galizzi A."/>
            <person name="Galleron N."/>
            <person name="Ghim S.-Y."/>
            <person name="Glaser P."/>
            <person name="Goffeau A."/>
            <person name="Golightly E.J."/>
            <person name="Grandi G."/>
            <person name="Guiseppi G."/>
            <person name="Guy B.J."/>
            <person name="Haga K."/>
            <person name="Haiech J."/>
            <person name="Harwood C.R."/>
            <person name="Henaut A."/>
            <person name="Hilbert H."/>
            <person name="Holsappel S."/>
            <person name="Hosono S."/>
            <person name="Hullo M.-F."/>
            <person name="Itaya M."/>
            <person name="Jones L.-M."/>
            <person name="Joris B."/>
            <person name="Karamata D."/>
            <person name="Kasahara Y."/>
            <person name="Klaerr-Blanchard M."/>
            <person name="Klein C."/>
            <person name="Kobayashi Y."/>
            <person name="Koetter P."/>
            <person name="Koningstein G."/>
            <person name="Krogh S."/>
            <person name="Kumano M."/>
            <person name="Kurita K."/>
            <person name="Lapidus A."/>
            <person name="Lardinois S."/>
            <person name="Lauber J."/>
            <person name="Lazarevic V."/>
            <person name="Lee S.-M."/>
            <person name="Levine A."/>
            <person name="Liu H."/>
            <person name="Masuda S."/>
            <person name="Mauel C."/>
            <person name="Medigue C."/>
            <person name="Medina N."/>
            <person name="Mellado R.P."/>
            <person name="Mizuno M."/>
            <person name="Moestl D."/>
            <person name="Nakai S."/>
            <person name="Noback M."/>
            <person name="Noone D."/>
            <person name="O'Reilly M."/>
            <person name="Ogawa K."/>
            <person name="Ogiwara A."/>
            <person name="Oudega B."/>
            <person name="Park S.-H."/>
            <person name="Parro V."/>
            <person name="Pohl T.M."/>
            <person name="Portetelle D."/>
            <person name="Porwollik S."/>
            <person name="Prescott A.M."/>
            <person name="Presecan E."/>
            <person name="Pujic P."/>
            <person name="Purnelle B."/>
            <person name="Rapoport G."/>
            <person name="Rey M."/>
            <person name="Reynolds S."/>
            <person name="Rieger M."/>
            <person name="Rivolta C."/>
            <person name="Rocha E."/>
            <person name="Roche B."/>
            <person name="Rose M."/>
            <person name="Sadaie Y."/>
            <person name="Sato T."/>
            <person name="Scanlan E."/>
            <person name="Schleich S."/>
            <person name="Schroeter R."/>
            <person name="Scoffone F."/>
            <person name="Sekiguchi J."/>
            <person name="Sekowska A."/>
            <person name="Seror S.J."/>
            <person name="Serror P."/>
            <person name="Shin B.-S."/>
            <person name="Soldo B."/>
            <person name="Sorokin A."/>
            <person name="Tacconi E."/>
            <person name="Takagi T."/>
            <person name="Takahashi H."/>
            <person name="Takemaru K."/>
            <person name="Takeuchi M."/>
            <person name="Tamakoshi A."/>
            <person name="Tanaka T."/>
            <person name="Terpstra P."/>
            <person name="Tognoni A."/>
            <person name="Tosato V."/>
            <person name="Uchiyama S."/>
            <person name="Vandenbol M."/>
            <person name="Vannier F."/>
            <person name="Vassarotti A."/>
            <person name="Viari A."/>
            <person name="Wambutt R."/>
            <person name="Wedler E."/>
            <person name="Wedler H."/>
            <person name="Weitzenegger T."/>
            <person name="Winters P."/>
            <person name="Wipat A."/>
            <person name="Yamamoto H."/>
            <person name="Yamane K."/>
            <person name="Yasumoto K."/>
            <person name="Yata K."/>
            <person name="Yoshida K."/>
            <person name="Yoshikawa H.-F."/>
            <person name="Zumstein E."/>
            <person name="Yoshikawa H."/>
            <person name="Danchin A."/>
        </authorList>
    </citation>
    <scope>NUCLEOTIDE SEQUENCE [LARGE SCALE GENOMIC DNA]</scope>
    <source>
        <strain>168</strain>
    </source>
</reference>
<reference key="3">
    <citation type="journal article" date="2021" name="PLoS Genet.">
        <title>Diverse LXG toxin and antitoxin systems specifically mediate intraspecies competition in Bacillus subtilis biofilms.</title>
        <authorList>
            <person name="Kobayashi K."/>
        </authorList>
    </citation>
    <scope>DISRUPTION PHENOTYPE</scope>
    <source>
        <strain>168 / Marburg / ATCC 6051 / DSM 10 / JCM 1465 / NBRC 13719 / NCIMB 3610 / NRRL NRS-744 / VKM B-501</strain>
    </source>
</reference>
<organism>
    <name type="scientific">Bacillus subtilis (strain 168)</name>
    <dbReference type="NCBI Taxonomy" id="224308"/>
    <lineage>
        <taxon>Bacteria</taxon>
        <taxon>Bacillati</taxon>
        <taxon>Bacillota</taxon>
        <taxon>Bacilli</taxon>
        <taxon>Bacillales</taxon>
        <taxon>Bacillaceae</taxon>
        <taxon>Bacillus</taxon>
    </lineage>
</organism>
<feature type="chain" id="PRO_0000049993" description="Protein YwqH">
    <location>
        <begin position="1"/>
        <end position="140"/>
    </location>
</feature>
<feature type="coiled-coil region" evidence="1">
    <location>
        <begin position="6"/>
        <end position="51"/>
    </location>
</feature>
<keyword id="KW-0175">Coiled coil</keyword>
<keyword id="KW-1185">Reference proteome</keyword>
<name>YWQH_BACSU</name>
<sequence>MGYESMLADIKSSLNGKISDVEDKIEKLKKAKKDIDTLQEEAITEIKEIVKPELGKHWTGTKADDFDKGREEAKSEASKIVNDKYNEYMASINGKIFDLEWDKAKYASELFIANGAADLLKKGEEFAEEVGNTISKLKWW</sequence>